<reference key="1">
    <citation type="submission" date="2007-07" db="EMBL/GenBank/DDBJ databases">
        <title>Complete sequence of chromosome of Shewanella baltica OS185.</title>
        <authorList>
            <consortium name="US DOE Joint Genome Institute"/>
            <person name="Copeland A."/>
            <person name="Lucas S."/>
            <person name="Lapidus A."/>
            <person name="Barry K."/>
            <person name="Glavina del Rio T."/>
            <person name="Dalin E."/>
            <person name="Tice H."/>
            <person name="Pitluck S."/>
            <person name="Sims D."/>
            <person name="Brettin T."/>
            <person name="Bruce D."/>
            <person name="Detter J.C."/>
            <person name="Han C."/>
            <person name="Schmutz J."/>
            <person name="Larimer F."/>
            <person name="Land M."/>
            <person name="Hauser L."/>
            <person name="Kyrpides N."/>
            <person name="Mikhailova N."/>
            <person name="Brettar I."/>
            <person name="Rodrigues J."/>
            <person name="Konstantinidis K."/>
            <person name="Tiedje J."/>
            <person name="Richardson P."/>
        </authorList>
    </citation>
    <scope>NUCLEOTIDE SEQUENCE [LARGE SCALE GENOMIC DNA]</scope>
    <source>
        <strain>OS185</strain>
    </source>
</reference>
<organism>
    <name type="scientific">Shewanella baltica (strain OS185)</name>
    <dbReference type="NCBI Taxonomy" id="402882"/>
    <lineage>
        <taxon>Bacteria</taxon>
        <taxon>Pseudomonadati</taxon>
        <taxon>Pseudomonadota</taxon>
        <taxon>Gammaproteobacteria</taxon>
        <taxon>Alteromonadales</taxon>
        <taxon>Shewanellaceae</taxon>
        <taxon>Shewanella</taxon>
    </lineage>
</organism>
<feature type="chain" id="PRO_1000006754" description="Aspartate--tRNA ligase">
    <location>
        <begin position="1"/>
        <end position="592"/>
    </location>
</feature>
<feature type="region of interest" description="Aspartate" evidence="1">
    <location>
        <begin position="197"/>
        <end position="200"/>
    </location>
</feature>
<feature type="binding site" evidence="1">
    <location>
        <position position="173"/>
    </location>
    <ligand>
        <name>L-aspartate</name>
        <dbReference type="ChEBI" id="CHEBI:29991"/>
    </ligand>
</feature>
<feature type="binding site" evidence="1">
    <location>
        <begin position="219"/>
        <end position="221"/>
    </location>
    <ligand>
        <name>ATP</name>
        <dbReference type="ChEBI" id="CHEBI:30616"/>
    </ligand>
</feature>
<feature type="binding site" evidence="1">
    <location>
        <position position="219"/>
    </location>
    <ligand>
        <name>L-aspartate</name>
        <dbReference type="ChEBI" id="CHEBI:29991"/>
    </ligand>
</feature>
<feature type="binding site" evidence="1">
    <location>
        <position position="228"/>
    </location>
    <ligand>
        <name>ATP</name>
        <dbReference type="ChEBI" id="CHEBI:30616"/>
    </ligand>
</feature>
<feature type="binding site" evidence="1">
    <location>
        <position position="448"/>
    </location>
    <ligand>
        <name>L-aspartate</name>
        <dbReference type="ChEBI" id="CHEBI:29991"/>
    </ligand>
</feature>
<feature type="binding site" evidence="1">
    <location>
        <position position="482"/>
    </location>
    <ligand>
        <name>ATP</name>
        <dbReference type="ChEBI" id="CHEBI:30616"/>
    </ligand>
</feature>
<feature type="binding site" evidence="1">
    <location>
        <position position="489"/>
    </location>
    <ligand>
        <name>L-aspartate</name>
        <dbReference type="ChEBI" id="CHEBI:29991"/>
    </ligand>
</feature>
<feature type="binding site" evidence="1">
    <location>
        <begin position="534"/>
        <end position="537"/>
    </location>
    <ligand>
        <name>ATP</name>
        <dbReference type="ChEBI" id="CHEBI:30616"/>
    </ligand>
</feature>
<dbReference type="EC" id="6.1.1.12" evidence="1"/>
<dbReference type="EMBL" id="CP000753">
    <property type="protein sequence ID" value="ABS08445.1"/>
    <property type="molecule type" value="Genomic_DNA"/>
</dbReference>
<dbReference type="RefSeq" id="WP_012089298.1">
    <property type="nucleotide sequence ID" value="NC_009665.1"/>
</dbReference>
<dbReference type="SMR" id="A6WNQ6"/>
<dbReference type="KEGG" id="sbm:Shew185_2307"/>
<dbReference type="HOGENOM" id="CLU_014330_3_2_6"/>
<dbReference type="GO" id="GO:0005737">
    <property type="term" value="C:cytoplasm"/>
    <property type="evidence" value="ECO:0007669"/>
    <property type="project" value="UniProtKB-SubCell"/>
</dbReference>
<dbReference type="GO" id="GO:0004815">
    <property type="term" value="F:aspartate-tRNA ligase activity"/>
    <property type="evidence" value="ECO:0007669"/>
    <property type="project" value="UniProtKB-UniRule"/>
</dbReference>
<dbReference type="GO" id="GO:0005524">
    <property type="term" value="F:ATP binding"/>
    <property type="evidence" value="ECO:0007669"/>
    <property type="project" value="UniProtKB-UniRule"/>
</dbReference>
<dbReference type="GO" id="GO:0003676">
    <property type="term" value="F:nucleic acid binding"/>
    <property type="evidence" value="ECO:0007669"/>
    <property type="project" value="InterPro"/>
</dbReference>
<dbReference type="GO" id="GO:0006422">
    <property type="term" value="P:aspartyl-tRNA aminoacylation"/>
    <property type="evidence" value="ECO:0007669"/>
    <property type="project" value="UniProtKB-UniRule"/>
</dbReference>
<dbReference type="CDD" id="cd00777">
    <property type="entry name" value="AspRS_core"/>
    <property type="match status" value="1"/>
</dbReference>
<dbReference type="CDD" id="cd04317">
    <property type="entry name" value="EcAspRS_like_N"/>
    <property type="match status" value="1"/>
</dbReference>
<dbReference type="FunFam" id="2.40.50.140:FF:000080">
    <property type="entry name" value="Aspartate--tRNA ligase"/>
    <property type="match status" value="1"/>
</dbReference>
<dbReference type="Gene3D" id="3.30.930.10">
    <property type="entry name" value="Bira Bifunctional Protein, Domain 2"/>
    <property type="match status" value="1"/>
</dbReference>
<dbReference type="Gene3D" id="3.30.1360.30">
    <property type="entry name" value="GAD-like domain"/>
    <property type="match status" value="1"/>
</dbReference>
<dbReference type="Gene3D" id="2.40.50.140">
    <property type="entry name" value="Nucleic acid-binding proteins"/>
    <property type="match status" value="1"/>
</dbReference>
<dbReference type="HAMAP" id="MF_00044">
    <property type="entry name" value="Asp_tRNA_synth_type1"/>
    <property type="match status" value="1"/>
</dbReference>
<dbReference type="InterPro" id="IPR004364">
    <property type="entry name" value="Aa-tRNA-synt_II"/>
</dbReference>
<dbReference type="InterPro" id="IPR006195">
    <property type="entry name" value="aa-tRNA-synth_II"/>
</dbReference>
<dbReference type="InterPro" id="IPR045864">
    <property type="entry name" value="aa-tRNA-synth_II/BPL/LPL"/>
</dbReference>
<dbReference type="InterPro" id="IPR004524">
    <property type="entry name" value="Asp-tRNA-ligase_1"/>
</dbReference>
<dbReference type="InterPro" id="IPR047089">
    <property type="entry name" value="Asp-tRNA-ligase_1_N"/>
</dbReference>
<dbReference type="InterPro" id="IPR002312">
    <property type="entry name" value="Asp/Asn-tRNA-synth_IIb"/>
</dbReference>
<dbReference type="InterPro" id="IPR047090">
    <property type="entry name" value="AspRS_core"/>
</dbReference>
<dbReference type="InterPro" id="IPR004115">
    <property type="entry name" value="GAD-like_sf"/>
</dbReference>
<dbReference type="InterPro" id="IPR029351">
    <property type="entry name" value="GAD_dom"/>
</dbReference>
<dbReference type="InterPro" id="IPR012340">
    <property type="entry name" value="NA-bd_OB-fold"/>
</dbReference>
<dbReference type="InterPro" id="IPR004365">
    <property type="entry name" value="NA-bd_OB_tRNA"/>
</dbReference>
<dbReference type="NCBIfam" id="TIGR00459">
    <property type="entry name" value="aspS_bact"/>
    <property type="match status" value="1"/>
</dbReference>
<dbReference type="NCBIfam" id="NF001750">
    <property type="entry name" value="PRK00476.1"/>
    <property type="match status" value="1"/>
</dbReference>
<dbReference type="PANTHER" id="PTHR22594:SF5">
    <property type="entry name" value="ASPARTATE--TRNA LIGASE, MITOCHONDRIAL"/>
    <property type="match status" value="1"/>
</dbReference>
<dbReference type="PANTHER" id="PTHR22594">
    <property type="entry name" value="ASPARTYL/LYSYL-TRNA SYNTHETASE"/>
    <property type="match status" value="1"/>
</dbReference>
<dbReference type="Pfam" id="PF02938">
    <property type="entry name" value="GAD"/>
    <property type="match status" value="1"/>
</dbReference>
<dbReference type="Pfam" id="PF00152">
    <property type="entry name" value="tRNA-synt_2"/>
    <property type="match status" value="1"/>
</dbReference>
<dbReference type="Pfam" id="PF01336">
    <property type="entry name" value="tRNA_anti-codon"/>
    <property type="match status" value="1"/>
</dbReference>
<dbReference type="PRINTS" id="PR01042">
    <property type="entry name" value="TRNASYNTHASP"/>
</dbReference>
<dbReference type="SUPFAM" id="SSF55681">
    <property type="entry name" value="Class II aaRS and biotin synthetases"/>
    <property type="match status" value="1"/>
</dbReference>
<dbReference type="SUPFAM" id="SSF55261">
    <property type="entry name" value="GAD domain-like"/>
    <property type="match status" value="1"/>
</dbReference>
<dbReference type="SUPFAM" id="SSF50249">
    <property type="entry name" value="Nucleic acid-binding proteins"/>
    <property type="match status" value="1"/>
</dbReference>
<dbReference type="PROSITE" id="PS50862">
    <property type="entry name" value="AA_TRNA_LIGASE_II"/>
    <property type="match status" value="1"/>
</dbReference>
<protein>
    <recommendedName>
        <fullName evidence="1">Aspartate--tRNA ligase</fullName>
        <ecNumber evidence="1">6.1.1.12</ecNumber>
    </recommendedName>
    <alternativeName>
        <fullName evidence="1">Aspartyl-tRNA synthetase</fullName>
        <shortName evidence="1">AspRS</shortName>
    </alternativeName>
</protein>
<comment type="function">
    <text evidence="1">Catalyzes the attachment of L-aspartate to tRNA(Asp) in a two-step reaction: L-aspartate is first activated by ATP to form Asp-AMP and then transferred to the acceptor end of tRNA(Asp).</text>
</comment>
<comment type="catalytic activity">
    <reaction evidence="1">
        <text>tRNA(Asp) + L-aspartate + ATP = L-aspartyl-tRNA(Asp) + AMP + diphosphate</text>
        <dbReference type="Rhea" id="RHEA:19649"/>
        <dbReference type="Rhea" id="RHEA-COMP:9660"/>
        <dbReference type="Rhea" id="RHEA-COMP:9678"/>
        <dbReference type="ChEBI" id="CHEBI:29991"/>
        <dbReference type="ChEBI" id="CHEBI:30616"/>
        <dbReference type="ChEBI" id="CHEBI:33019"/>
        <dbReference type="ChEBI" id="CHEBI:78442"/>
        <dbReference type="ChEBI" id="CHEBI:78516"/>
        <dbReference type="ChEBI" id="CHEBI:456215"/>
        <dbReference type="EC" id="6.1.1.12"/>
    </reaction>
</comment>
<comment type="subunit">
    <text evidence="1">Homodimer.</text>
</comment>
<comment type="subcellular location">
    <subcellularLocation>
        <location evidence="1">Cytoplasm</location>
    </subcellularLocation>
</comment>
<comment type="similarity">
    <text evidence="1">Belongs to the class-II aminoacyl-tRNA synthetase family. Type 1 subfamily.</text>
</comment>
<name>SYD_SHEB8</name>
<proteinExistence type="inferred from homology"/>
<gene>
    <name evidence="1" type="primary">aspS</name>
    <name type="ordered locus">Shew185_2307</name>
</gene>
<evidence type="ECO:0000255" key="1">
    <source>
        <dbReference type="HAMAP-Rule" id="MF_00044"/>
    </source>
</evidence>
<accession>A6WNQ6</accession>
<keyword id="KW-0030">Aminoacyl-tRNA synthetase</keyword>
<keyword id="KW-0067">ATP-binding</keyword>
<keyword id="KW-0963">Cytoplasm</keyword>
<keyword id="KW-0436">Ligase</keyword>
<keyword id="KW-0547">Nucleotide-binding</keyword>
<keyword id="KW-0648">Protein biosynthesis</keyword>
<sequence length="592" mass="65988">MRSHYCGDVNKSHVGQEVTLVGWVNRSRDLGGVVFLDLRDREGLIQVVYDPDLPEVFNVASTLRAEFCVQVKGLVRARPDSQVNGQMKTGEIEVLGQALTIINAADPLPLSMDNYQNNSEEQRLKYRYLDLRRPEMAQRLIFRAKVTSSVRRFLDSNGFLDIETPILTKATPEGARDYLVPSRTYKGQFFALPQSPQLFKQLLMMSGFDRYYQIVKCFRDEDLRADRQPEFTQIDIETSFMSSEQVMAKTEEMMRGLFLEMLNVDLGEFPRMTYNEAMRRFGSDKPDLRNPLELVDIADLLKEVEFAVFSGPANDEEGRVAALRIPGGAALSRKQIDDYTKFVGIYGAKGLAWMKINDLSLGLEGIQSPVLKFLNESIVNEIVSRTGAQTGDIILFGADQATVVAESMGALRLKAGEDFNLLQGEWRPLWVVDFPMFEKINGNFHAVHHPFTAPRGVTAAELEANPANRVSDAYDMVLNGCELGGGSVRIHNQEMQSAVFRILGITDEEAKEKFGFLLEALRYGTPPHAGLAFGLDRIIMLMTGASSIRDVMAFPKTTTAACPLTNAPGFANPQQLAELGIAVVEKAVKTED</sequence>